<organism>
    <name type="scientific">Staphylococcus aureus (strain MSSA476)</name>
    <dbReference type="NCBI Taxonomy" id="282459"/>
    <lineage>
        <taxon>Bacteria</taxon>
        <taxon>Bacillati</taxon>
        <taxon>Bacillota</taxon>
        <taxon>Bacilli</taxon>
        <taxon>Bacillales</taxon>
        <taxon>Staphylococcaceae</taxon>
        <taxon>Staphylococcus</taxon>
    </lineage>
</organism>
<evidence type="ECO:0000255" key="1">
    <source>
        <dbReference type="HAMAP-Rule" id="MF_02033"/>
    </source>
</evidence>
<evidence type="ECO:0000256" key="2">
    <source>
        <dbReference type="SAM" id="MobiDB-lite"/>
    </source>
</evidence>
<protein>
    <recommendedName>
        <fullName evidence="1">Cell division protein FtsA</fullName>
    </recommendedName>
</protein>
<reference key="1">
    <citation type="journal article" date="2004" name="Proc. Natl. Acad. Sci. U.S.A.">
        <title>Complete genomes of two clinical Staphylococcus aureus strains: evidence for the rapid evolution of virulence and drug resistance.</title>
        <authorList>
            <person name="Holden M.T.G."/>
            <person name="Feil E.J."/>
            <person name="Lindsay J.A."/>
            <person name="Peacock S.J."/>
            <person name="Day N.P.J."/>
            <person name="Enright M.C."/>
            <person name="Foster T.J."/>
            <person name="Moore C.E."/>
            <person name="Hurst L."/>
            <person name="Atkin R."/>
            <person name="Barron A."/>
            <person name="Bason N."/>
            <person name="Bentley S.D."/>
            <person name="Chillingworth C."/>
            <person name="Chillingworth T."/>
            <person name="Churcher C."/>
            <person name="Clark L."/>
            <person name="Corton C."/>
            <person name="Cronin A."/>
            <person name="Doggett J."/>
            <person name="Dowd L."/>
            <person name="Feltwell T."/>
            <person name="Hance Z."/>
            <person name="Harris B."/>
            <person name="Hauser H."/>
            <person name="Holroyd S."/>
            <person name="Jagels K."/>
            <person name="James K.D."/>
            <person name="Lennard N."/>
            <person name="Line A."/>
            <person name="Mayes R."/>
            <person name="Moule S."/>
            <person name="Mungall K."/>
            <person name="Ormond D."/>
            <person name="Quail M.A."/>
            <person name="Rabbinowitsch E."/>
            <person name="Rutherford K.M."/>
            <person name="Sanders M."/>
            <person name="Sharp S."/>
            <person name="Simmonds M."/>
            <person name="Stevens K."/>
            <person name="Whitehead S."/>
            <person name="Barrell B.G."/>
            <person name="Spratt B.G."/>
            <person name="Parkhill J."/>
        </authorList>
    </citation>
    <scope>NUCLEOTIDE SEQUENCE [LARGE SCALE GENOMIC DNA]</scope>
    <source>
        <strain>MSSA476</strain>
    </source>
</reference>
<comment type="function">
    <text evidence="1">Cell division protein that is involved in the assembly of the Z ring. May serve as a membrane anchor for the Z ring.</text>
</comment>
<comment type="subunit">
    <text evidence="1">Self-interacts. Interacts with FtsZ.</text>
</comment>
<comment type="subcellular location">
    <subcellularLocation>
        <location evidence="1">Cell membrane</location>
        <topology evidence="1">Peripheral membrane protein</topology>
        <orientation evidence="1">Cytoplasmic side</orientation>
    </subcellularLocation>
    <text evidence="1">Localizes to the Z ring in an FtsZ-dependent manner. Targeted to the membrane through a conserved C-terminal amphipathic helix.</text>
</comment>
<comment type="similarity">
    <text evidence="1">Belongs to the FtsA/MreB family.</text>
</comment>
<name>FTSA_STAAS</name>
<proteinExistence type="inferred from homology"/>
<gene>
    <name evidence="1" type="primary">ftsA</name>
    <name type="ordered locus">SAS1119</name>
</gene>
<feature type="chain" id="PRO_0000062750" description="Cell division protein FtsA">
    <location>
        <begin position="1"/>
        <end position="470"/>
    </location>
</feature>
<feature type="region of interest" description="Disordered" evidence="2">
    <location>
        <begin position="416"/>
        <end position="470"/>
    </location>
</feature>
<feature type="compositionally biased region" description="Acidic residues" evidence="2">
    <location>
        <begin position="425"/>
        <end position="434"/>
    </location>
</feature>
<feature type="compositionally biased region" description="Basic and acidic residues" evidence="2">
    <location>
        <begin position="436"/>
        <end position="461"/>
    </location>
</feature>
<keyword id="KW-0131">Cell cycle</keyword>
<keyword id="KW-0132">Cell division</keyword>
<keyword id="KW-1003">Cell membrane</keyword>
<keyword id="KW-0472">Membrane</keyword>
<sequence>MEEHYYVSIDIGSSSVKTIVGEKFHNGINVIGTGQTYTSGIKNGLIDDFDIARQAIKDTIKKASIASGVDIKEVFLKLPIIGTEVYDESNEIDFYEDTEINGSHIEKVLEGIREKNDVQETEVINVFPIRFIVDKENEVSDPKELIARHSLKVEAGVIAIQKSILINMIKCVEACGVDVLDVYSDAYNYGSILTATEKELGACVIDIGEDVTQVAFYERGELVDADSIEMAGRDITDDIAQGLNTSYETAEKVKHQYGHAFYDSASDQDIFTVEQVDSDETVQYTQKDLSDFIEARVEEIFFEVFDVLQDLGLTKVNGGFIVTGGSANLLGVKELLSDMVSEKVRIHTPSQMGIRKPEFSSAISTISSSIAFDELLDYVTINYHDSEETEEDVIDVKDKDNESKLGGFDWFKRKTNKKDTHENEVESTDEEIYQSEDNHQEHKQNHEHVQDKDKDKEESKFKKLMKSLFE</sequence>
<dbReference type="EMBL" id="BX571857">
    <property type="protein sequence ID" value="CAG42896.1"/>
    <property type="molecule type" value="Genomic_DNA"/>
</dbReference>
<dbReference type="RefSeq" id="WP_000391033.1">
    <property type="nucleotide sequence ID" value="NC_002953.3"/>
</dbReference>
<dbReference type="SMR" id="Q6GA27"/>
<dbReference type="KEGG" id="sas:SAS1119"/>
<dbReference type="HOGENOM" id="CLU_037850_1_0_9"/>
<dbReference type="GO" id="GO:0032153">
    <property type="term" value="C:cell division site"/>
    <property type="evidence" value="ECO:0007669"/>
    <property type="project" value="UniProtKB-UniRule"/>
</dbReference>
<dbReference type="GO" id="GO:0009898">
    <property type="term" value="C:cytoplasmic side of plasma membrane"/>
    <property type="evidence" value="ECO:0007669"/>
    <property type="project" value="UniProtKB-UniRule"/>
</dbReference>
<dbReference type="GO" id="GO:0043093">
    <property type="term" value="P:FtsZ-dependent cytokinesis"/>
    <property type="evidence" value="ECO:0007669"/>
    <property type="project" value="UniProtKB-UniRule"/>
</dbReference>
<dbReference type="CDD" id="cd24048">
    <property type="entry name" value="ASKHA_NBD_FtsA"/>
    <property type="match status" value="1"/>
</dbReference>
<dbReference type="FunFam" id="3.30.420.40:FF:000196">
    <property type="entry name" value="Cell division protein FtsA"/>
    <property type="match status" value="1"/>
</dbReference>
<dbReference type="Gene3D" id="3.30.1490.110">
    <property type="match status" value="1"/>
</dbReference>
<dbReference type="Gene3D" id="3.30.420.40">
    <property type="match status" value="2"/>
</dbReference>
<dbReference type="HAMAP" id="MF_02033">
    <property type="entry name" value="FtsA"/>
    <property type="match status" value="1"/>
</dbReference>
<dbReference type="InterPro" id="IPR043129">
    <property type="entry name" value="ATPase_NBD"/>
</dbReference>
<dbReference type="InterPro" id="IPR020823">
    <property type="entry name" value="Cell_div_FtsA"/>
</dbReference>
<dbReference type="InterPro" id="IPR050696">
    <property type="entry name" value="FtsA/MreB"/>
</dbReference>
<dbReference type="InterPro" id="IPR003494">
    <property type="entry name" value="SHS2_FtsA"/>
</dbReference>
<dbReference type="NCBIfam" id="TIGR01174">
    <property type="entry name" value="ftsA"/>
    <property type="match status" value="1"/>
</dbReference>
<dbReference type="PANTHER" id="PTHR32432:SF4">
    <property type="entry name" value="CELL DIVISION PROTEIN FTSA"/>
    <property type="match status" value="1"/>
</dbReference>
<dbReference type="PANTHER" id="PTHR32432">
    <property type="entry name" value="CELL DIVISION PROTEIN FTSA-RELATED"/>
    <property type="match status" value="1"/>
</dbReference>
<dbReference type="Pfam" id="PF14450">
    <property type="entry name" value="FtsA"/>
    <property type="match status" value="1"/>
</dbReference>
<dbReference type="Pfam" id="PF02491">
    <property type="entry name" value="SHS2_FTSA"/>
    <property type="match status" value="1"/>
</dbReference>
<dbReference type="PIRSF" id="PIRSF003101">
    <property type="entry name" value="FtsA"/>
    <property type="match status" value="1"/>
</dbReference>
<dbReference type="SMART" id="SM00842">
    <property type="entry name" value="FtsA"/>
    <property type="match status" value="1"/>
</dbReference>
<dbReference type="SUPFAM" id="SSF53067">
    <property type="entry name" value="Actin-like ATPase domain"/>
    <property type="match status" value="2"/>
</dbReference>
<accession>Q6GA27</accession>